<reference key="1">
    <citation type="journal article" date="2003" name="Proc. Natl. Acad. Sci. U.S.A.">
        <title>The genome sequence of Clostridium tetani, the causative agent of tetanus disease.</title>
        <authorList>
            <person name="Brueggemann H."/>
            <person name="Baeumer S."/>
            <person name="Fricke W.F."/>
            <person name="Wiezer A."/>
            <person name="Liesegang H."/>
            <person name="Decker I."/>
            <person name="Herzberg C."/>
            <person name="Martinez-Arias R."/>
            <person name="Merkl R."/>
            <person name="Henne A."/>
            <person name="Gottschalk G."/>
        </authorList>
    </citation>
    <scope>NUCLEOTIDE SEQUENCE [LARGE SCALE GENOMIC DNA]</scope>
    <source>
        <strain>Massachusetts / E88</strain>
    </source>
</reference>
<protein>
    <recommendedName>
        <fullName evidence="1">Flavin-dependent thymidylate synthase</fullName>
        <shortName evidence="1">FDTS</shortName>
        <ecNumber evidence="1">2.1.1.148</ecNumber>
    </recommendedName>
    <alternativeName>
        <fullName evidence="1">FAD-dependent thymidylate synthase</fullName>
    </alternativeName>
    <alternativeName>
        <fullName evidence="1">Thymidylate synthase ThyX</fullName>
        <shortName evidence="1">TS</shortName>
        <shortName evidence="1">TSase</shortName>
    </alternativeName>
</protein>
<evidence type="ECO:0000255" key="1">
    <source>
        <dbReference type="HAMAP-Rule" id="MF_01408"/>
    </source>
</evidence>
<evidence type="ECO:0000255" key="2">
    <source>
        <dbReference type="PROSITE-ProRule" id="PRU00661"/>
    </source>
</evidence>
<keyword id="KW-0274">FAD</keyword>
<keyword id="KW-0285">Flavoprotein</keyword>
<keyword id="KW-0489">Methyltransferase</keyword>
<keyword id="KW-0521">NADP</keyword>
<keyword id="KW-0545">Nucleotide biosynthesis</keyword>
<keyword id="KW-1185">Reference proteome</keyword>
<keyword id="KW-0808">Transferase</keyword>
<name>THYX_CLOTE</name>
<gene>
    <name evidence="1" type="primary">thyX</name>
    <name type="ordered locus">CTC_02620</name>
</gene>
<feature type="chain" id="PRO_0000175557" description="Flavin-dependent thymidylate synthase">
    <location>
        <begin position="1"/>
        <end position="249"/>
    </location>
</feature>
<feature type="domain" description="ThyX" evidence="2">
    <location>
        <begin position="8"/>
        <end position="225"/>
    </location>
</feature>
<feature type="short sequence motif" description="ThyX motif" evidence="1">
    <location>
        <begin position="86"/>
        <end position="96"/>
    </location>
</feature>
<feature type="active site" description="Involved in ionization of N3 of dUMP, leading to its activation" evidence="1">
    <location>
        <position position="191"/>
    </location>
</feature>
<feature type="binding site" evidence="1">
    <location>
        <position position="62"/>
    </location>
    <ligand>
        <name>FAD</name>
        <dbReference type="ChEBI" id="CHEBI:57692"/>
        <note>ligand shared between neighboring subunits</note>
    </ligand>
</feature>
<feature type="binding site" evidence="1">
    <location>
        <begin position="83"/>
        <end position="86"/>
    </location>
    <ligand>
        <name>dUMP</name>
        <dbReference type="ChEBI" id="CHEBI:246422"/>
        <note>ligand shared between dimeric partners</note>
    </ligand>
</feature>
<feature type="binding site" evidence="1">
    <location>
        <begin position="86"/>
        <end position="88"/>
    </location>
    <ligand>
        <name>FAD</name>
        <dbReference type="ChEBI" id="CHEBI:57692"/>
        <note>ligand shared between neighboring subunits</note>
    </ligand>
</feature>
<feature type="binding site" description="in other chain" evidence="1">
    <location>
        <begin position="94"/>
        <end position="98"/>
    </location>
    <ligand>
        <name>dUMP</name>
        <dbReference type="ChEBI" id="CHEBI:246422"/>
        <note>ligand shared between dimeric partners</note>
    </ligand>
</feature>
<feature type="binding site" evidence="1">
    <location>
        <position position="94"/>
    </location>
    <ligand>
        <name>FAD</name>
        <dbReference type="ChEBI" id="CHEBI:57692"/>
        <note>ligand shared between neighboring subunits</note>
    </ligand>
</feature>
<feature type="binding site" description="in other chain" evidence="1">
    <location>
        <position position="164"/>
    </location>
    <ligand>
        <name>dUMP</name>
        <dbReference type="ChEBI" id="CHEBI:246422"/>
        <note>ligand shared between dimeric partners</note>
    </ligand>
</feature>
<feature type="binding site" evidence="1">
    <location>
        <begin position="180"/>
        <end position="182"/>
    </location>
    <ligand>
        <name>FAD</name>
        <dbReference type="ChEBI" id="CHEBI:57692"/>
        <note>ligand shared between neighboring subunits</note>
    </ligand>
</feature>
<feature type="binding site" evidence="1">
    <location>
        <position position="186"/>
    </location>
    <ligand>
        <name>FAD</name>
        <dbReference type="ChEBI" id="CHEBI:57692"/>
        <note>ligand shared between neighboring subunits</note>
    </ligand>
</feature>
<feature type="binding site" evidence="1">
    <location>
        <position position="191"/>
    </location>
    <ligand>
        <name>dUMP</name>
        <dbReference type="ChEBI" id="CHEBI:246422"/>
        <note>ligand shared between dimeric partners</note>
    </ligand>
</feature>
<comment type="function">
    <text evidence="1">Catalyzes the reductive methylation of 2'-deoxyuridine-5'-monophosphate (dUMP) to 2'-deoxythymidine-5'-monophosphate (dTMP) while utilizing 5,10-methylenetetrahydrofolate (mTHF) as the methyl donor, and NADPH and FADH(2) as the reductant.</text>
</comment>
<comment type="catalytic activity">
    <reaction evidence="1">
        <text>dUMP + (6R)-5,10-methylene-5,6,7,8-tetrahydrofolate + NADPH + H(+) = dTMP + (6S)-5,6,7,8-tetrahydrofolate + NADP(+)</text>
        <dbReference type="Rhea" id="RHEA:29043"/>
        <dbReference type="ChEBI" id="CHEBI:15378"/>
        <dbReference type="ChEBI" id="CHEBI:15636"/>
        <dbReference type="ChEBI" id="CHEBI:57453"/>
        <dbReference type="ChEBI" id="CHEBI:57783"/>
        <dbReference type="ChEBI" id="CHEBI:58349"/>
        <dbReference type="ChEBI" id="CHEBI:63528"/>
        <dbReference type="ChEBI" id="CHEBI:246422"/>
        <dbReference type="EC" id="2.1.1.148"/>
    </reaction>
</comment>
<comment type="cofactor">
    <cofactor evidence="1">
        <name>FAD</name>
        <dbReference type="ChEBI" id="CHEBI:57692"/>
    </cofactor>
    <text evidence="1">Binds 4 FAD per tetramer. Each FAD binding site is formed by three monomers.</text>
</comment>
<comment type="pathway">
    <text evidence="1">Pyrimidine metabolism; dTTP biosynthesis.</text>
</comment>
<comment type="subunit">
    <text evidence="1">Homotetramer.</text>
</comment>
<comment type="similarity">
    <text evidence="1">Belongs to the thymidylate synthase ThyX family.</text>
</comment>
<accession>Q890M6</accession>
<proteinExistence type="inferred from homology"/>
<dbReference type="EC" id="2.1.1.148" evidence="1"/>
<dbReference type="EMBL" id="AE015927">
    <property type="protein sequence ID" value="AAO37071.1"/>
    <property type="molecule type" value="Genomic_DNA"/>
</dbReference>
<dbReference type="SMR" id="Q890M6"/>
<dbReference type="STRING" id="212717.CTC_02620"/>
<dbReference type="KEGG" id="ctc:CTC_02620"/>
<dbReference type="HOGENOM" id="CLU_077585_0_0_9"/>
<dbReference type="UniPathway" id="UPA00575"/>
<dbReference type="Proteomes" id="UP000001412">
    <property type="component" value="Chromosome"/>
</dbReference>
<dbReference type="GO" id="GO:0050660">
    <property type="term" value="F:flavin adenine dinucleotide binding"/>
    <property type="evidence" value="ECO:0007669"/>
    <property type="project" value="InterPro"/>
</dbReference>
<dbReference type="GO" id="GO:0070402">
    <property type="term" value="F:NADPH binding"/>
    <property type="evidence" value="ECO:0007669"/>
    <property type="project" value="TreeGrafter"/>
</dbReference>
<dbReference type="GO" id="GO:0050797">
    <property type="term" value="F:thymidylate synthase (FAD) activity"/>
    <property type="evidence" value="ECO:0007669"/>
    <property type="project" value="UniProtKB-UniRule"/>
</dbReference>
<dbReference type="GO" id="GO:0004799">
    <property type="term" value="F:thymidylate synthase activity"/>
    <property type="evidence" value="ECO:0007669"/>
    <property type="project" value="TreeGrafter"/>
</dbReference>
<dbReference type="GO" id="GO:0006231">
    <property type="term" value="P:dTMP biosynthetic process"/>
    <property type="evidence" value="ECO:0007669"/>
    <property type="project" value="UniProtKB-UniRule"/>
</dbReference>
<dbReference type="GO" id="GO:0006235">
    <property type="term" value="P:dTTP biosynthetic process"/>
    <property type="evidence" value="ECO:0007669"/>
    <property type="project" value="UniProtKB-UniRule"/>
</dbReference>
<dbReference type="GO" id="GO:0032259">
    <property type="term" value="P:methylation"/>
    <property type="evidence" value="ECO:0007669"/>
    <property type="project" value="UniProtKB-KW"/>
</dbReference>
<dbReference type="CDD" id="cd20175">
    <property type="entry name" value="ThyX"/>
    <property type="match status" value="1"/>
</dbReference>
<dbReference type="FunFam" id="3.30.1360.170:FF:000004">
    <property type="entry name" value="Flavin-dependent thymidylate synthase"/>
    <property type="match status" value="1"/>
</dbReference>
<dbReference type="Gene3D" id="3.30.1360.170">
    <property type="match status" value="1"/>
</dbReference>
<dbReference type="HAMAP" id="MF_01408">
    <property type="entry name" value="ThyX"/>
    <property type="match status" value="1"/>
</dbReference>
<dbReference type="InterPro" id="IPR003669">
    <property type="entry name" value="Thymidylate_synthase_ThyX"/>
</dbReference>
<dbReference type="InterPro" id="IPR036098">
    <property type="entry name" value="Thymidylate_synthase_ThyX_sf"/>
</dbReference>
<dbReference type="NCBIfam" id="TIGR02170">
    <property type="entry name" value="thyX"/>
    <property type="match status" value="1"/>
</dbReference>
<dbReference type="PANTHER" id="PTHR34934">
    <property type="entry name" value="FLAVIN-DEPENDENT THYMIDYLATE SYNTHASE"/>
    <property type="match status" value="1"/>
</dbReference>
<dbReference type="PANTHER" id="PTHR34934:SF1">
    <property type="entry name" value="FLAVIN-DEPENDENT THYMIDYLATE SYNTHASE"/>
    <property type="match status" value="1"/>
</dbReference>
<dbReference type="Pfam" id="PF02511">
    <property type="entry name" value="Thy1"/>
    <property type="match status" value="1"/>
</dbReference>
<dbReference type="SUPFAM" id="SSF69796">
    <property type="entry name" value="Thymidylate synthase-complementing protein Thy1"/>
    <property type="match status" value="1"/>
</dbReference>
<dbReference type="PROSITE" id="PS51331">
    <property type="entry name" value="THYX"/>
    <property type="match status" value="1"/>
</dbReference>
<organism>
    <name type="scientific">Clostridium tetani (strain Massachusetts / E88)</name>
    <dbReference type="NCBI Taxonomy" id="212717"/>
    <lineage>
        <taxon>Bacteria</taxon>
        <taxon>Bacillati</taxon>
        <taxon>Bacillota</taxon>
        <taxon>Clostridia</taxon>
        <taxon>Eubacteriales</taxon>
        <taxon>Clostridiaceae</taxon>
        <taxon>Clostridium</taxon>
    </lineage>
</organism>
<sequence>MRGKTMGVKVKLLEYTPNPEKVVASAAKLCYSPVGVEEMAKDLSEEKVNKFLNMLMSYGHESPIEHVSFTFAAEGVSRSLTHQLVRHRIASYSQQSQRYVKLDQFQYIIPPEIDKDNNTRSIFIEAMENSQKAYDKIASTLEQKYISEGMKRKEAEKKAIEDARYVFPNACETKIIFTMNARTLMNFFRHRCCTRAQWEIRNLANEMLSEVKKVAPNLFKYSGPSCVNGNCPEGAMSCGKAAEMKKIYL</sequence>